<reference key="1">
    <citation type="journal article" date="1995" name="Biochem. Biophys. Res. Commun.">
        <title>Cloning of a new member of the TGF-beta family: a putative new activin beta C chain.</title>
        <authorList>
            <person name="Hoetten G."/>
            <person name="Neidhardt H."/>
            <person name="Schneider C."/>
            <person name="Pohl J."/>
        </authorList>
    </citation>
    <scope>NUCLEOTIDE SEQUENCE [MRNA]</scope>
    <source>
        <tissue>Liver</tissue>
    </source>
</reference>
<reference key="2">
    <citation type="submission" date="2005-07" db="EMBL/GenBank/DDBJ databases">
        <authorList>
            <person name="Mural R.J."/>
            <person name="Istrail S."/>
            <person name="Sutton G.G."/>
            <person name="Florea L."/>
            <person name="Halpern A.L."/>
            <person name="Mobarry C.M."/>
            <person name="Lippert R."/>
            <person name="Walenz B."/>
            <person name="Shatkay H."/>
            <person name="Dew I."/>
            <person name="Miller J.R."/>
            <person name="Flanigan M.J."/>
            <person name="Edwards N.J."/>
            <person name="Bolanos R."/>
            <person name="Fasulo D."/>
            <person name="Halldorsson B.V."/>
            <person name="Hannenhalli S."/>
            <person name="Turner R."/>
            <person name="Yooseph S."/>
            <person name="Lu F."/>
            <person name="Nusskern D.R."/>
            <person name="Shue B.C."/>
            <person name="Zheng X.H."/>
            <person name="Zhong F."/>
            <person name="Delcher A.L."/>
            <person name="Huson D.H."/>
            <person name="Kravitz S.A."/>
            <person name="Mouchard L."/>
            <person name="Reinert K."/>
            <person name="Remington K.A."/>
            <person name="Clark A.G."/>
            <person name="Waterman M.S."/>
            <person name="Eichler E.E."/>
            <person name="Adams M.D."/>
            <person name="Hunkapiller M.W."/>
            <person name="Myers E.W."/>
            <person name="Venter J.C."/>
        </authorList>
    </citation>
    <scope>NUCLEOTIDE SEQUENCE [LARGE SCALE GENOMIC DNA]</scope>
</reference>
<reference key="3">
    <citation type="journal article" date="2004" name="Genome Res.">
        <title>The status, quality, and expansion of the NIH full-length cDNA project: the Mammalian Gene Collection (MGC).</title>
        <authorList>
            <consortium name="The MGC Project Team"/>
        </authorList>
    </citation>
    <scope>NUCLEOTIDE SEQUENCE [LARGE SCALE MRNA]</scope>
    <source>
        <tissue>Brain</tissue>
    </source>
</reference>
<reference key="4">
    <citation type="journal article" date="1998" name="Prostate">
        <title>Inhibins, activins, and follistatins: expression of mRNAs and cellular localization in tissues from men with benign prostatic hyperplasia.</title>
        <authorList>
            <person name="Thomas T.Z."/>
            <person name="Chapman S.M."/>
            <person name="Hong W."/>
            <person name="Gurusingfhe C."/>
            <person name="Mellor S.L."/>
            <person name="Fletcher R."/>
            <person name="Pedersen J."/>
            <person name="Risbridger G.P."/>
        </authorList>
    </citation>
    <scope>TISSUE SPECIFICITY</scope>
</reference>
<dbReference type="EMBL" id="X82540">
    <property type="protein sequence ID" value="CAA57890.1"/>
    <property type="molecule type" value="mRNA"/>
</dbReference>
<dbReference type="EMBL" id="CH471054">
    <property type="protein sequence ID" value="EAW97011.1"/>
    <property type="molecule type" value="Genomic_DNA"/>
</dbReference>
<dbReference type="EMBL" id="BC130324">
    <property type="protein sequence ID" value="AAI30325.1"/>
    <property type="molecule type" value="mRNA"/>
</dbReference>
<dbReference type="EMBL" id="BC130326">
    <property type="protein sequence ID" value="AAI30327.1"/>
    <property type="molecule type" value="mRNA"/>
</dbReference>
<dbReference type="CCDS" id="CCDS8938.1"/>
<dbReference type="PIR" id="JC2466">
    <property type="entry name" value="JC2466"/>
</dbReference>
<dbReference type="RefSeq" id="NP_005529.1">
    <property type="nucleotide sequence ID" value="NM_005538.4"/>
</dbReference>
<dbReference type="SMR" id="P55103"/>
<dbReference type="FunCoup" id="P55103">
    <property type="interactions" value="418"/>
</dbReference>
<dbReference type="STRING" id="9606.ENSP00000308716"/>
<dbReference type="GlyCosmos" id="P55103">
    <property type="glycosylation" value="3 sites, No reported glycans"/>
</dbReference>
<dbReference type="GlyGen" id="P55103">
    <property type="glycosylation" value="4 sites, 1 O-linked glycan (1 site)"/>
</dbReference>
<dbReference type="iPTMnet" id="P55103"/>
<dbReference type="PhosphoSitePlus" id="P55103"/>
<dbReference type="BioMuta" id="INHBC"/>
<dbReference type="DMDM" id="1708438"/>
<dbReference type="MassIVE" id="P55103"/>
<dbReference type="PaxDb" id="9606-ENSP00000308716"/>
<dbReference type="PeptideAtlas" id="P55103"/>
<dbReference type="ProteomicsDB" id="56791"/>
<dbReference type="Antibodypedia" id="28599">
    <property type="antibodies" value="319 antibodies from 29 providers"/>
</dbReference>
<dbReference type="DNASU" id="3626"/>
<dbReference type="Ensembl" id="ENST00000309668.3">
    <property type="protein sequence ID" value="ENSP00000308716.2"/>
    <property type="gene ID" value="ENSG00000175189.4"/>
</dbReference>
<dbReference type="GeneID" id="3626"/>
<dbReference type="KEGG" id="hsa:3626"/>
<dbReference type="MANE-Select" id="ENST00000309668.3">
    <property type="protein sequence ID" value="ENSP00000308716.2"/>
    <property type="RefSeq nucleotide sequence ID" value="NM_005538.4"/>
    <property type="RefSeq protein sequence ID" value="NP_005529.1"/>
</dbReference>
<dbReference type="UCSC" id="uc001snv.3">
    <property type="organism name" value="human"/>
</dbReference>
<dbReference type="AGR" id="HGNC:6068"/>
<dbReference type="CTD" id="3626"/>
<dbReference type="DisGeNET" id="3626"/>
<dbReference type="GeneCards" id="INHBC"/>
<dbReference type="HGNC" id="HGNC:6068">
    <property type="gene designation" value="INHBC"/>
</dbReference>
<dbReference type="HPA" id="ENSG00000175189">
    <property type="expression patterns" value="Tissue enriched (liver)"/>
</dbReference>
<dbReference type="MIM" id="601233">
    <property type="type" value="gene"/>
</dbReference>
<dbReference type="neXtProt" id="NX_P55103"/>
<dbReference type="OpenTargets" id="ENSG00000175189"/>
<dbReference type="PharmGKB" id="PA29879"/>
<dbReference type="VEuPathDB" id="HostDB:ENSG00000175189"/>
<dbReference type="eggNOG" id="KOG3900">
    <property type="taxonomic scope" value="Eukaryota"/>
</dbReference>
<dbReference type="GeneTree" id="ENSGT00940000160065"/>
<dbReference type="HOGENOM" id="CLU_020515_5_0_1"/>
<dbReference type="InParanoid" id="P55103"/>
<dbReference type="OMA" id="GIDCQGG"/>
<dbReference type="OrthoDB" id="6516235at2759"/>
<dbReference type="PAN-GO" id="P55103">
    <property type="GO annotations" value="4 GO annotations based on evolutionary models"/>
</dbReference>
<dbReference type="PhylomeDB" id="P55103"/>
<dbReference type="TreeFam" id="TF351791"/>
<dbReference type="PathwayCommons" id="P55103"/>
<dbReference type="Reactome" id="R-HSA-209822">
    <property type="pathway name" value="Glycoprotein hormones"/>
</dbReference>
<dbReference type="SignaLink" id="P55103"/>
<dbReference type="BioGRID-ORCS" id="3626">
    <property type="hits" value="20 hits in 1146 CRISPR screens"/>
</dbReference>
<dbReference type="GeneWiki" id="INHBC"/>
<dbReference type="GenomeRNAi" id="3626"/>
<dbReference type="Pharos" id="P55103">
    <property type="development level" value="Tbio"/>
</dbReference>
<dbReference type="PRO" id="PR:P55103"/>
<dbReference type="Proteomes" id="UP000005640">
    <property type="component" value="Chromosome 12"/>
</dbReference>
<dbReference type="RNAct" id="P55103">
    <property type="molecule type" value="protein"/>
</dbReference>
<dbReference type="Bgee" id="ENSG00000175189">
    <property type="expression patterns" value="Expressed in right lobe of liver and 34 other cell types or tissues"/>
</dbReference>
<dbReference type="GO" id="GO:0005576">
    <property type="term" value="C:extracellular region"/>
    <property type="evidence" value="ECO:0000304"/>
    <property type="project" value="ProtInc"/>
</dbReference>
<dbReference type="GO" id="GO:0005615">
    <property type="term" value="C:extracellular space"/>
    <property type="evidence" value="ECO:0000318"/>
    <property type="project" value="GO_Central"/>
</dbReference>
<dbReference type="GO" id="GO:0005125">
    <property type="term" value="F:cytokine activity"/>
    <property type="evidence" value="ECO:0000318"/>
    <property type="project" value="GO_Central"/>
</dbReference>
<dbReference type="GO" id="GO:0008083">
    <property type="term" value="F:growth factor activity"/>
    <property type="evidence" value="ECO:0007669"/>
    <property type="project" value="UniProtKB-KW"/>
</dbReference>
<dbReference type="GO" id="GO:0005179">
    <property type="term" value="F:hormone activity"/>
    <property type="evidence" value="ECO:0007669"/>
    <property type="project" value="UniProtKB-KW"/>
</dbReference>
<dbReference type="GO" id="GO:0005160">
    <property type="term" value="F:transforming growth factor beta receptor binding"/>
    <property type="evidence" value="ECO:0000304"/>
    <property type="project" value="ProtInc"/>
</dbReference>
<dbReference type="CDD" id="cd19406">
    <property type="entry name" value="TGF_beta_INHBC_E"/>
    <property type="match status" value="1"/>
</dbReference>
<dbReference type="FunFam" id="2.10.90.10:FF:000005">
    <property type="entry name" value="Inhibin beta A chain"/>
    <property type="match status" value="1"/>
</dbReference>
<dbReference type="FunFam" id="2.60.120.970:FF:000022">
    <property type="entry name" value="Inhibin subunit beta C"/>
    <property type="match status" value="1"/>
</dbReference>
<dbReference type="Gene3D" id="2.60.120.970">
    <property type="match status" value="1"/>
</dbReference>
<dbReference type="Gene3D" id="2.10.90.10">
    <property type="entry name" value="Cystine-knot cytokines"/>
    <property type="match status" value="1"/>
</dbReference>
<dbReference type="InterPro" id="IPR029034">
    <property type="entry name" value="Cystine-knot_cytokine"/>
</dbReference>
<dbReference type="InterPro" id="IPR001318">
    <property type="entry name" value="Inhibin_betaC"/>
</dbReference>
<dbReference type="InterPro" id="IPR001839">
    <property type="entry name" value="TGF-b_C"/>
</dbReference>
<dbReference type="InterPro" id="IPR015615">
    <property type="entry name" value="TGF-beta-rel"/>
</dbReference>
<dbReference type="InterPro" id="IPR017948">
    <property type="entry name" value="TGFb_CS"/>
</dbReference>
<dbReference type="PANTHER" id="PTHR11848:SF130">
    <property type="entry name" value="INHIBIN BETA C CHAIN"/>
    <property type="match status" value="1"/>
</dbReference>
<dbReference type="PANTHER" id="PTHR11848">
    <property type="entry name" value="TGF-BETA FAMILY"/>
    <property type="match status" value="1"/>
</dbReference>
<dbReference type="Pfam" id="PF00019">
    <property type="entry name" value="TGF_beta"/>
    <property type="match status" value="1"/>
</dbReference>
<dbReference type="PRINTS" id="PR00672">
    <property type="entry name" value="INHIBINBC"/>
</dbReference>
<dbReference type="SMART" id="SM00204">
    <property type="entry name" value="TGFB"/>
    <property type="match status" value="1"/>
</dbReference>
<dbReference type="SUPFAM" id="SSF57501">
    <property type="entry name" value="Cystine-knot cytokines"/>
    <property type="match status" value="1"/>
</dbReference>
<dbReference type="PROSITE" id="PS00250">
    <property type="entry name" value="TGF_BETA_1"/>
    <property type="match status" value="1"/>
</dbReference>
<dbReference type="PROSITE" id="PS51362">
    <property type="entry name" value="TGF_BETA_2"/>
    <property type="match status" value="1"/>
</dbReference>
<protein>
    <recommendedName>
        <fullName>Inhibin beta C chain</fullName>
    </recommendedName>
    <alternativeName>
        <fullName>Activin beta-C chain</fullName>
    </alternativeName>
</protein>
<keyword id="KW-0165">Cleavage on pair of basic residues</keyword>
<keyword id="KW-1015">Disulfide bond</keyword>
<keyword id="KW-0325">Glycoprotein</keyword>
<keyword id="KW-0339">Growth factor</keyword>
<keyword id="KW-0372">Hormone</keyword>
<keyword id="KW-1267">Proteomics identification</keyword>
<keyword id="KW-1185">Reference proteome</keyword>
<keyword id="KW-0964">Secreted</keyword>
<keyword id="KW-0732">Signal</keyword>
<comment type="function">
    <text>Inhibins and activins inhibit and activate, respectively, the secretion of follitropin by the pituitary gland. Inhibins/activins are involved in regulating a number of diverse functions such as hypothalamic and pituitary hormone secretion, gonadal hormone secretion, germ cell development and maturation, erythroid differentiation, insulin secretion, nerve cell survival, embryonic axial development or bone growth, depending on their subunit composition. Inhibins appear to oppose the functions of activins.</text>
</comment>
<comment type="subunit">
    <text evidence="1">Homodimeric or heterodimeric through association with alpha and beta subunits, linked by one or more disulfide bonds. Inhibins are heterodimers of one alpha and one beta subunit. Activins are homo- or heterodimers of beta subunits only (By similarity).</text>
</comment>
<comment type="subcellular location">
    <subcellularLocation>
        <location evidence="1">Secreted</location>
    </subcellularLocation>
</comment>
<comment type="tissue specificity">
    <text evidence="3">Expressed in benign prostatic hyperplasia.</text>
</comment>
<comment type="similarity">
    <text evidence="4">Belongs to the TGF-beta family.</text>
</comment>
<feature type="signal peptide" evidence="2">
    <location>
        <begin position="1"/>
        <end position="18"/>
    </location>
</feature>
<feature type="propeptide" id="PRO_0000033730" evidence="2">
    <location>
        <begin position="19"/>
        <end position="236"/>
    </location>
</feature>
<feature type="chain" id="PRO_0000033731" description="Inhibin beta C chain">
    <location>
        <begin position="237"/>
        <end position="352"/>
    </location>
</feature>
<feature type="glycosylation site" description="N-linked (GlcNAc...) asparagine" evidence="2">
    <location>
        <position position="110"/>
    </location>
</feature>
<feature type="glycosylation site" description="N-linked (GlcNAc...) asparagine" evidence="2">
    <location>
        <position position="143"/>
    </location>
</feature>
<feature type="glycosylation site" description="N-linked (GlcNAc...) asparagine" evidence="2">
    <location>
        <position position="161"/>
    </location>
</feature>
<feature type="disulfide bond" evidence="1">
    <location>
        <begin position="240"/>
        <end position="248"/>
    </location>
</feature>
<feature type="disulfide bond" evidence="1">
    <location>
        <begin position="247"/>
        <end position="317"/>
    </location>
</feature>
<feature type="disulfide bond" evidence="1">
    <location>
        <begin position="276"/>
        <end position="349"/>
    </location>
</feature>
<feature type="disulfide bond" evidence="1">
    <location>
        <begin position="280"/>
        <end position="351"/>
    </location>
</feature>
<feature type="disulfide bond" description="Interchain" evidence="1">
    <location>
        <position position="316"/>
    </location>
</feature>
<feature type="sequence variant" id="VAR_024230" description="In dbSNP:rs2229357.">
    <original>R</original>
    <variation>Q</variation>
    <location>
        <position position="322"/>
    </location>
</feature>
<name>INHBC_HUMAN</name>
<accession>P55103</accession>
<accession>A1L3Y2</accession>
<organism>
    <name type="scientific">Homo sapiens</name>
    <name type="common">Human</name>
    <dbReference type="NCBI Taxonomy" id="9606"/>
    <lineage>
        <taxon>Eukaryota</taxon>
        <taxon>Metazoa</taxon>
        <taxon>Chordata</taxon>
        <taxon>Craniata</taxon>
        <taxon>Vertebrata</taxon>
        <taxon>Euteleostomi</taxon>
        <taxon>Mammalia</taxon>
        <taxon>Eutheria</taxon>
        <taxon>Euarchontoglires</taxon>
        <taxon>Primates</taxon>
        <taxon>Haplorrhini</taxon>
        <taxon>Catarrhini</taxon>
        <taxon>Hominidae</taxon>
        <taxon>Homo</taxon>
    </lineage>
</organism>
<proteinExistence type="evidence at protein level"/>
<evidence type="ECO:0000250" key="1"/>
<evidence type="ECO:0000255" key="2"/>
<evidence type="ECO:0000269" key="3">
    <source>
    </source>
</evidence>
<evidence type="ECO:0000305" key="4"/>
<sequence length="352" mass="38238">MTSSLLLAFLLLAPTTVATPRAGGQCPACGGPTLELESQRELLLDLAKRSILDKLHLTQRPTLNRPVSRAALRTALQHLHGVPQGALLEDNREQECEIISFAETGLSTINQTRLDFHFSSDRTAGDREVQQASLMFFVQLPSNTTWTLKVRVLVLGPHNTNLTLATQYLLEVDASGWHQLPLGPEAQAACSQGHLTLELVLEGQVAQSSVILGGAAHRPFVAARVRVGGKHQIHRRGIDCQGGSRMCCRQEFFVDFREIGWHDWIIQPEGYAMNFCIGQCPLHIAGMPGIAASFHTAVLNLLKANTAAGTTGGGSCCVPTARRPLSLLYYDRDSNIVKTDIPDMVVEACGCS</sequence>
<gene>
    <name type="primary">INHBC</name>
</gene>